<keyword id="KW-1015">Disulfide bond</keyword>
<keyword id="KW-0245">EGF-like domain</keyword>
<keyword id="KW-0325">Glycoprotein</keyword>
<keyword id="KW-0433">Leucine-rich repeat</keyword>
<keyword id="KW-0472">Membrane</keyword>
<keyword id="KW-1185">Reference proteome</keyword>
<keyword id="KW-0677">Repeat</keyword>
<keyword id="KW-0732">Signal</keyword>
<keyword id="KW-0812">Transmembrane</keyword>
<keyword id="KW-1133">Transmembrane helix</keyword>
<evidence type="ECO:0000250" key="1"/>
<evidence type="ECO:0000255" key="2"/>
<evidence type="ECO:0000255" key="3">
    <source>
        <dbReference type="PROSITE-ProRule" id="PRU00076"/>
    </source>
</evidence>
<evidence type="ECO:0000255" key="4">
    <source>
        <dbReference type="PROSITE-ProRule" id="PRU00316"/>
    </source>
</evidence>
<evidence type="ECO:0000256" key="5">
    <source>
        <dbReference type="SAM" id="MobiDB-lite"/>
    </source>
</evidence>
<evidence type="ECO:0000269" key="6">
    <source>
    </source>
</evidence>
<evidence type="ECO:0000305" key="7"/>
<dbReference type="EMBL" id="AJ458938">
    <property type="protein sequence ID" value="CAD30331.1"/>
    <property type="molecule type" value="mRNA"/>
</dbReference>
<dbReference type="EMBL" id="AK012169">
    <property type="protein sequence ID" value="BAB28075.1"/>
    <property type="molecule type" value="mRNA"/>
</dbReference>
<dbReference type="EMBL" id="AK083684">
    <property type="protein sequence ID" value="BAC38992.1"/>
    <property type="molecule type" value="mRNA"/>
</dbReference>
<dbReference type="EMBL" id="AK132325">
    <property type="protein sequence ID" value="BAE21105.1"/>
    <property type="molecule type" value="mRNA"/>
</dbReference>
<dbReference type="EMBL" id="BC050274">
    <property type="protein sequence ID" value="AAH50274.1"/>
    <property type="molecule type" value="mRNA"/>
</dbReference>
<dbReference type="CCDS" id="CCDS27921.1"/>
<dbReference type="RefSeq" id="NP_647468.2">
    <property type="nucleotide sequence ID" value="NM_139307.3"/>
</dbReference>
<dbReference type="SMR" id="Q9CZT5"/>
<dbReference type="BioGRID" id="232880">
    <property type="interactions" value="3"/>
</dbReference>
<dbReference type="FunCoup" id="Q9CZT5">
    <property type="interactions" value="113"/>
</dbReference>
<dbReference type="STRING" id="10090.ENSMUSP00000045162"/>
<dbReference type="GlyConnect" id="2817">
    <property type="glycosylation" value="1 N-Linked glycan (1 site)"/>
</dbReference>
<dbReference type="GlyCosmos" id="Q9CZT5">
    <property type="glycosylation" value="6 sites, 1 glycan"/>
</dbReference>
<dbReference type="GlyGen" id="Q9CZT5">
    <property type="glycosylation" value="6 sites, 6 N-linked glycans (5 sites)"/>
</dbReference>
<dbReference type="iPTMnet" id="Q9CZT5"/>
<dbReference type="PhosphoSitePlus" id="Q9CZT5"/>
<dbReference type="SwissPalm" id="Q9CZT5"/>
<dbReference type="CPTAC" id="non-CPTAC-3511"/>
<dbReference type="jPOST" id="Q9CZT5"/>
<dbReference type="PaxDb" id="10090-ENSMUSP00000045162"/>
<dbReference type="PeptideAtlas" id="Q9CZT5"/>
<dbReference type="ProteomicsDB" id="300165"/>
<dbReference type="Pumba" id="Q9CZT5"/>
<dbReference type="Antibodypedia" id="2203">
    <property type="antibodies" value="217 antibodies from 27 providers"/>
</dbReference>
<dbReference type="DNASU" id="246154"/>
<dbReference type="Ensembl" id="ENSMUST00000038770.4">
    <property type="protein sequence ID" value="ENSMUSP00000045162.4"/>
    <property type="gene ID" value="ENSMUSG00000039646.6"/>
</dbReference>
<dbReference type="GeneID" id="246154"/>
<dbReference type="KEGG" id="mmu:246154"/>
<dbReference type="UCSC" id="uc007xzz.2">
    <property type="organism name" value="mouse"/>
</dbReference>
<dbReference type="AGR" id="MGI:2177651"/>
<dbReference type="CTD" id="114990"/>
<dbReference type="MGI" id="MGI:2177651">
    <property type="gene designation" value="Vasn"/>
</dbReference>
<dbReference type="VEuPathDB" id="HostDB:ENSMUSG00000039646"/>
<dbReference type="eggNOG" id="KOG0619">
    <property type="taxonomic scope" value="Eukaryota"/>
</dbReference>
<dbReference type="GeneTree" id="ENSGT00940000159318"/>
<dbReference type="HOGENOM" id="CLU_432517_0_0_1"/>
<dbReference type="InParanoid" id="Q9CZT5"/>
<dbReference type="OMA" id="VPQPQDC"/>
<dbReference type="OrthoDB" id="676979at2759"/>
<dbReference type="PhylomeDB" id="Q9CZT5"/>
<dbReference type="TreeFam" id="TF351825"/>
<dbReference type="BioGRID-ORCS" id="246154">
    <property type="hits" value="1 hit in 78 CRISPR screens"/>
</dbReference>
<dbReference type="ChiTaRS" id="Vasn">
    <property type="organism name" value="mouse"/>
</dbReference>
<dbReference type="PRO" id="PR:Q9CZT5"/>
<dbReference type="Proteomes" id="UP000000589">
    <property type="component" value="Chromosome 16"/>
</dbReference>
<dbReference type="RNAct" id="Q9CZT5">
    <property type="molecule type" value="protein"/>
</dbReference>
<dbReference type="Bgee" id="ENSMUSG00000039646">
    <property type="expression patterns" value="Expressed in aorta tunica media and 251 other cell types or tissues"/>
</dbReference>
<dbReference type="GO" id="GO:0009986">
    <property type="term" value="C:cell surface"/>
    <property type="evidence" value="ECO:0007669"/>
    <property type="project" value="Ensembl"/>
</dbReference>
<dbReference type="GO" id="GO:0070062">
    <property type="term" value="C:extracellular exosome"/>
    <property type="evidence" value="ECO:0007669"/>
    <property type="project" value="Ensembl"/>
</dbReference>
<dbReference type="GO" id="GO:0005739">
    <property type="term" value="C:mitochondrion"/>
    <property type="evidence" value="ECO:0000314"/>
    <property type="project" value="MGI"/>
</dbReference>
<dbReference type="GO" id="GO:0005886">
    <property type="term" value="C:plasma membrane"/>
    <property type="evidence" value="ECO:0000314"/>
    <property type="project" value="MGI"/>
</dbReference>
<dbReference type="GO" id="GO:0050431">
    <property type="term" value="F:transforming growth factor beta binding"/>
    <property type="evidence" value="ECO:0007669"/>
    <property type="project" value="Ensembl"/>
</dbReference>
<dbReference type="GO" id="GO:0071456">
    <property type="term" value="P:cellular response to hypoxia"/>
    <property type="evidence" value="ECO:0000315"/>
    <property type="project" value="MGI"/>
</dbReference>
<dbReference type="GO" id="GO:0071461">
    <property type="term" value="P:cellular response to redox state"/>
    <property type="evidence" value="ECO:0000315"/>
    <property type="project" value="MGI"/>
</dbReference>
<dbReference type="GO" id="GO:0010719">
    <property type="term" value="P:negative regulation of epithelial to mesenchymal transition"/>
    <property type="evidence" value="ECO:0007669"/>
    <property type="project" value="Ensembl"/>
</dbReference>
<dbReference type="GO" id="GO:0030512">
    <property type="term" value="P:negative regulation of transforming growth factor beta receptor signaling pathway"/>
    <property type="evidence" value="ECO:0007669"/>
    <property type="project" value="Ensembl"/>
</dbReference>
<dbReference type="CDD" id="cd00054">
    <property type="entry name" value="EGF_CA"/>
    <property type="match status" value="1"/>
</dbReference>
<dbReference type="CDD" id="cd00063">
    <property type="entry name" value="FN3"/>
    <property type="match status" value="1"/>
</dbReference>
<dbReference type="FunFam" id="2.10.25.10:FF:001390">
    <property type="entry name" value="Vasorin"/>
    <property type="match status" value="1"/>
</dbReference>
<dbReference type="FunFam" id="2.60.40.10:FF:001413">
    <property type="entry name" value="Vasorin"/>
    <property type="match status" value="1"/>
</dbReference>
<dbReference type="FunFam" id="3.80.10.10:FF:000211">
    <property type="entry name" value="vasorin"/>
    <property type="match status" value="1"/>
</dbReference>
<dbReference type="FunFam" id="3.80.10.10:FF:000250">
    <property type="entry name" value="vasorin"/>
    <property type="match status" value="1"/>
</dbReference>
<dbReference type="Gene3D" id="2.60.40.10">
    <property type="entry name" value="Immunoglobulins"/>
    <property type="match status" value="1"/>
</dbReference>
<dbReference type="Gene3D" id="2.10.25.10">
    <property type="entry name" value="Laminin"/>
    <property type="match status" value="1"/>
</dbReference>
<dbReference type="Gene3D" id="3.80.10.10">
    <property type="entry name" value="Ribonuclease Inhibitor"/>
    <property type="match status" value="2"/>
</dbReference>
<dbReference type="InterPro" id="IPR000483">
    <property type="entry name" value="Cys-rich_flank_reg_C"/>
</dbReference>
<dbReference type="InterPro" id="IPR000742">
    <property type="entry name" value="EGF-like_dom"/>
</dbReference>
<dbReference type="InterPro" id="IPR003961">
    <property type="entry name" value="FN3_dom"/>
</dbReference>
<dbReference type="InterPro" id="IPR036116">
    <property type="entry name" value="FN3_sf"/>
</dbReference>
<dbReference type="InterPro" id="IPR013783">
    <property type="entry name" value="Ig-like_fold"/>
</dbReference>
<dbReference type="InterPro" id="IPR001611">
    <property type="entry name" value="Leu-rich_rpt"/>
</dbReference>
<dbReference type="InterPro" id="IPR003591">
    <property type="entry name" value="Leu-rich_rpt_typical-subtyp"/>
</dbReference>
<dbReference type="InterPro" id="IPR032675">
    <property type="entry name" value="LRR_dom_sf"/>
</dbReference>
<dbReference type="InterPro" id="IPR050541">
    <property type="entry name" value="LRR_TM_domain-containing"/>
</dbReference>
<dbReference type="InterPro" id="IPR000372">
    <property type="entry name" value="LRRNT"/>
</dbReference>
<dbReference type="PANTHER" id="PTHR24369">
    <property type="entry name" value="ANTIGEN BSP, PUTATIVE-RELATED"/>
    <property type="match status" value="1"/>
</dbReference>
<dbReference type="PANTHER" id="PTHR24369:SF160">
    <property type="entry name" value="VASORIN"/>
    <property type="match status" value="1"/>
</dbReference>
<dbReference type="Pfam" id="PF00008">
    <property type="entry name" value="EGF"/>
    <property type="match status" value="1"/>
</dbReference>
<dbReference type="Pfam" id="PF13855">
    <property type="entry name" value="LRR_8"/>
    <property type="match status" value="2"/>
</dbReference>
<dbReference type="PRINTS" id="PR00019">
    <property type="entry name" value="LEURICHRPT"/>
</dbReference>
<dbReference type="SMART" id="SM00181">
    <property type="entry name" value="EGF"/>
    <property type="match status" value="1"/>
</dbReference>
<dbReference type="SMART" id="SM00060">
    <property type="entry name" value="FN3"/>
    <property type="match status" value="1"/>
</dbReference>
<dbReference type="SMART" id="SM00365">
    <property type="entry name" value="LRR_SD22"/>
    <property type="match status" value="6"/>
</dbReference>
<dbReference type="SMART" id="SM00369">
    <property type="entry name" value="LRR_TYP"/>
    <property type="match status" value="7"/>
</dbReference>
<dbReference type="SMART" id="SM00082">
    <property type="entry name" value="LRRCT"/>
    <property type="match status" value="1"/>
</dbReference>
<dbReference type="SMART" id="SM00013">
    <property type="entry name" value="LRRNT"/>
    <property type="match status" value="1"/>
</dbReference>
<dbReference type="SUPFAM" id="SSF57196">
    <property type="entry name" value="EGF/Laminin"/>
    <property type="match status" value="1"/>
</dbReference>
<dbReference type="SUPFAM" id="SSF49265">
    <property type="entry name" value="Fibronectin type III"/>
    <property type="match status" value="1"/>
</dbReference>
<dbReference type="SUPFAM" id="SSF52058">
    <property type="entry name" value="L domain-like"/>
    <property type="match status" value="1"/>
</dbReference>
<dbReference type="PROSITE" id="PS00022">
    <property type="entry name" value="EGF_1"/>
    <property type="match status" value="1"/>
</dbReference>
<dbReference type="PROSITE" id="PS01186">
    <property type="entry name" value="EGF_2"/>
    <property type="match status" value="1"/>
</dbReference>
<dbReference type="PROSITE" id="PS50026">
    <property type="entry name" value="EGF_3"/>
    <property type="match status" value="1"/>
</dbReference>
<dbReference type="PROSITE" id="PS50853">
    <property type="entry name" value="FN3"/>
    <property type="match status" value="1"/>
</dbReference>
<dbReference type="PROSITE" id="PS51450">
    <property type="entry name" value="LRR"/>
    <property type="match status" value="8"/>
</dbReference>
<gene>
    <name type="primary">Vasn</name>
    <name type="synonym">Slitl2</name>
</gene>
<feature type="signal peptide" evidence="2">
    <location>
        <begin position="1"/>
        <end position="24"/>
    </location>
</feature>
<feature type="chain" id="PRO_0000232631" description="Vasorin">
    <location>
        <begin position="25"/>
        <end position="673"/>
    </location>
</feature>
<feature type="topological domain" description="Extracellular" evidence="2">
    <location>
        <begin position="25"/>
        <end position="576"/>
    </location>
</feature>
<feature type="transmembrane region" description="Helical" evidence="2">
    <location>
        <begin position="577"/>
        <end position="597"/>
    </location>
</feature>
<feature type="topological domain" description="Cytoplasmic" evidence="2">
    <location>
        <begin position="598"/>
        <end position="673"/>
    </location>
</feature>
<feature type="domain" description="LRRNT">
    <location>
        <begin position="25"/>
        <end position="53"/>
    </location>
</feature>
<feature type="repeat" description="LRR 1">
    <location>
        <begin position="54"/>
        <end position="75"/>
    </location>
</feature>
<feature type="repeat" description="LRR 2">
    <location>
        <begin position="78"/>
        <end position="99"/>
    </location>
</feature>
<feature type="repeat" description="LRR 3">
    <location>
        <begin position="102"/>
        <end position="123"/>
    </location>
</feature>
<feature type="repeat" description="LRR 4">
    <location>
        <begin position="126"/>
        <end position="147"/>
    </location>
</feature>
<feature type="repeat" description="LRR 5">
    <location>
        <begin position="150"/>
        <end position="170"/>
    </location>
</feature>
<feature type="repeat" description="LRR 6">
    <location>
        <begin position="171"/>
        <end position="192"/>
    </location>
</feature>
<feature type="repeat" description="LRR 7">
    <location>
        <begin position="194"/>
        <end position="215"/>
    </location>
</feature>
<feature type="repeat" description="LRR 8">
    <location>
        <begin position="218"/>
        <end position="239"/>
    </location>
</feature>
<feature type="repeat" description="LRR 9">
    <location>
        <begin position="241"/>
        <end position="265"/>
    </location>
</feature>
<feature type="repeat" description="LRR 10">
    <location>
        <begin position="266"/>
        <end position="288"/>
    </location>
</feature>
<feature type="domain" description="LRRCT">
    <location>
        <begin position="299"/>
        <end position="352"/>
    </location>
</feature>
<feature type="domain" description="EGF-like" evidence="3">
    <location>
        <begin position="406"/>
        <end position="443"/>
    </location>
</feature>
<feature type="domain" description="Fibronectin type-III" evidence="4">
    <location>
        <begin position="463"/>
        <end position="559"/>
    </location>
</feature>
<feature type="region of interest" description="Disordered" evidence="5">
    <location>
        <begin position="369"/>
        <end position="389"/>
    </location>
</feature>
<feature type="region of interest" description="Disordered" evidence="5">
    <location>
        <begin position="608"/>
        <end position="648"/>
    </location>
</feature>
<feature type="compositionally biased region" description="Polar residues" evidence="5">
    <location>
        <begin position="370"/>
        <end position="389"/>
    </location>
</feature>
<feature type="glycosylation site" description="N-linked (GlcNAc...) asparagine" evidence="2">
    <location>
        <position position="102"/>
    </location>
</feature>
<feature type="glycosylation site" description="N-linked (GlcNAc...) asparagine" evidence="2">
    <location>
        <position position="118"/>
    </location>
</feature>
<feature type="glycosylation site" description="N-linked (GlcNAc...) asparagine" evidence="2">
    <location>
        <position position="274"/>
    </location>
</feature>
<feature type="glycosylation site" description="N-linked (GlcNAc...) asparagine" evidence="2">
    <location>
        <position position="501"/>
    </location>
</feature>
<feature type="glycosylation site" description="N-linked (GlcNAc...) asparagine" evidence="2">
    <location>
        <position position="529"/>
    </location>
</feature>
<feature type="glycosylation site" description="N-linked (GlcNAc...) asparagine" evidence="2">
    <location>
        <position position="555"/>
    </location>
</feature>
<feature type="disulfide bond" evidence="3">
    <location>
        <begin position="410"/>
        <end position="421"/>
    </location>
</feature>
<feature type="disulfide bond" evidence="3">
    <location>
        <begin position="415"/>
        <end position="431"/>
    </location>
</feature>
<feature type="disulfide bond" evidence="3">
    <location>
        <begin position="433"/>
        <end position="442"/>
    </location>
</feature>
<feature type="sequence conflict" description="In Ref. 2; BAB28075." evidence="7" ref="2">
    <original>S</original>
    <variation>Y</variation>
    <location>
        <position position="225"/>
    </location>
</feature>
<feature type="sequence conflict" description="In Ref. 2; BAC38992." evidence="7" ref="2">
    <original>L</original>
    <variation>H</variation>
    <location>
        <position position="383"/>
    </location>
</feature>
<protein>
    <recommendedName>
        <fullName>Vasorin</fullName>
    </recommendedName>
    <alternativeName>
        <fullName>Protein slit-like 2</fullName>
    </alternativeName>
</protein>
<sequence length="673" mass="72261">MHSRSCLPPLLLLLLVLLGSGVQGCPSGCQCNQPQTVFCTARQGTTVPRDVPPDTVGLYIFENGITTLDVGCFAGLPGLQLLDLSQNQITSLPGGIFQPLVNLSNLDLTANKLHEISNETFRGLRRLERLYLGKNRIRHIQPGAFDALDRLLELKLPDNELRVLPPLHLPRLLLLDLSHNSIPALEAGILDTANVEALRLAGLGLRQLDEGLFGRLLNLHDLDVSDNQLEHMPSVIQGLRGLTRLRLAGNTRIAQIRPEDLAGLTALQELDVSNLSLQALPSDLSSLFPRLRLLAAARNPFNCLCPLSWFGPWVRENHVVLASPEETRCHFPPKNAGRLLLDLDYADFGCPVTTTTATVPTIRSTIREPTLSTSSQAPTWPSLTEPTTQASTVLSTAPPTMRPAPQPQDCPASICLNGGSCRLGARHHWECLCPEGFIGLYCESPVEQGMKPSSIPDTPRPPPLLPLSIEPVSPTSLRVKLQRYLQGNTVQLRSLRLTYRNLSGPDKRLVTLRLPASLAEYTVTQLRPNATYSICVTPLGAGRTPEGEEACGEANTSQAVRSNHAPVTQAREGNLPLLIAPALAAVLLAVLAAAGAAYCVRRARATSTAQDKGQVGPGTGPLELEGVKAPLEPGSKATEGGGEALSGGPECEVPLMGYPGPSLQGVLPAKHYI</sequence>
<name>VASN_MOUSE</name>
<accession>Q9CZT5</accession>
<accession>Q8BJJ0</accession>
<accession>Q8R2G5</accession>
<proteinExistence type="evidence at transcript level"/>
<comment type="function">
    <text evidence="1">May act as an inhibitor of TGF-beta signaling.</text>
</comment>
<comment type="subunit">
    <text evidence="1">Interacts with TGFB1, TGFB2 and TGFB3.</text>
</comment>
<comment type="subcellular location">
    <subcellularLocation>
        <location evidence="7">Membrane</location>
        <topology evidence="7">Single-pass type I membrane protein</topology>
    </subcellularLocation>
</comment>
<comment type="developmental stage">
    <text evidence="6">Expression begins at 10.5 dpc and increases as development progresses to 17.5 dpc. Expression rises in parallel with the differentiation of vascular smooth muscle cells (VSMCs) of the aorta.</text>
</comment>
<comment type="induction">
    <text evidence="6">Upon retinoic acid-induced differentiation of smooth muscle cells in vitro.</text>
</comment>
<comment type="PTM">
    <text evidence="1">N-glycosylated.</text>
</comment>
<reference key="1">
    <citation type="submission" date="2002-04" db="EMBL/GenBank/DDBJ databases">
        <title>Structure and expression analysis of the mouse Slit-like 2 (Slitl2) gene.</title>
        <authorList>
            <person name="Schrewe H."/>
            <person name="Kutejova E."/>
        </authorList>
    </citation>
    <scope>NUCLEOTIDE SEQUENCE [MRNA]</scope>
    <source>
        <strain>C57BL/6J</strain>
    </source>
</reference>
<reference key="2">
    <citation type="journal article" date="2005" name="Science">
        <title>The transcriptional landscape of the mammalian genome.</title>
        <authorList>
            <person name="Carninci P."/>
            <person name="Kasukawa T."/>
            <person name="Katayama S."/>
            <person name="Gough J."/>
            <person name="Frith M.C."/>
            <person name="Maeda N."/>
            <person name="Oyama R."/>
            <person name="Ravasi T."/>
            <person name="Lenhard B."/>
            <person name="Wells C."/>
            <person name="Kodzius R."/>
            <person name="Shimokawa K."/>
            <person name="Bajic V.B."/>
            <person name="Brenner S.E."/>
            <person name="Batalov S."/>
            <person name="Forrest A.R."/>
            <person name="Zavolan M."/>
            <person name="Davis M.J."/>
            <person name="Wilming L.G."/>
            <person name="Aidinis V."/>
            <person name="Allen J.E."/>
            <person name="Ambesi-Impiombato A."/>
            <person name="Apweiler R."/>
            <person name="Aturaliya R.N."/>
            <person name="Bailey T.L."/>
            <person name="Bansal M."/>
            <person name="Baxter L."/>
            <person name="Beisel K.W."/>
            <person name="Bersano T."/>
            <person name="Bono H."/>
            <person name="Chalk A.M."/>
            <person name="Chiu K.P."/>
            <person name="Choudhary V."/>
            <person name="Christoffels A."/>
            <person name="Clutterbuck D.R."/>
            <person name="Crowe M.L."/>
            <person name="Dalla E."/>
            <person name="Dalrymple B.P."/>
            <person name="de Bono B."/>
            <person name="Della Gatta G."/>
            <person name="di Bernardo D."/>
            <person name="Down T."/>
            <person name="Engstrom P."/>
            <person name="Fagiolini M."/>
            <person name="Faulkner G."/>
            <person name="Fletcher C.F."/>
            <person name="Fukushima T."/>
            <person name="Furuno M."/>
            <person name="Futaki S."/>
            <person name="Gariboldi M."/>
            <person name="Georgii-Hemming P."/>
            <person name="Gingeras T.R."/>
            <person name="Gojobori T."/>
            <person name="Green R.E."/>
            <person name="Gustincich S."/>
            <person name="Harbers M."/>
            <person name="Hayashi Y."/>
            <person name="Hensch T.K."/>
            <person name="Hirokawa N."/>
            <person name="Hill D."/>
            <person name="Huminiecki L."/>
            <person name="Iacono M."/>
            <person name="Ikeo K."/>
            <person name="Iwama A."/>
            <person name="Ishikawa T."/>
            <person name="Jakt M."/>
            <person name="Kanapin A."/>
            <person name="Katoh M."/>
            <person name="Kawasawa Y."/>
            <person name="Kelso J."/>
            <person name="Kitamura H."/>
            <person name="Kitano H."/>
            <person name="Kollias G."/>
            <person name="Krishnan S.P."/>
            <person name="Kruger A."/>
            <person name="Kummerfeld S.K."/>
            <person name="Kurochkin I.V."/>
            <person name="Lareau L.F."/>
            <person name="Lazarevic D."/>
            <person name="Lipovich L."/>
            <person name="Liu J."/>
            <person name="Liuni S."/>
            <person name="McWilliam S."/>
            <person name="Madan Babu M."/>
            <person name="Madera M."/>
            <person name="Marchionni L."/>
            <person name="Matsuda H."/>
            <person name="Matsuzawa S."/>
            <person name="Miki H."/>
            <person name="Mignone F."/>
            <person name="Miyake S."/>
            <person name="Morris K."/>
            <person name="Mottagui-Tabar S."/>
            <person name="Mulder N."/>
            <person name="Nakano N."/>
            <person name="Nakauchi H."/>
            <person name="Ng P."/>
            <person name="Nilsson R."/>
            <person name="Nishiguchi S."/>
            <person name="Nishikawa S."/>
            <person name="Nori F."/>
            <person name="Ohara O."/>
            <person name="Okazaki Y."/>
            <person name="Orlando V."/>
            <person name="Pang K.C."/>
            <person name="Pavan W.J."/>
            <person name="Pavesi G."/>
            <person name="Pesole G."/>
            <person name="Petrovsky N."/>
            <person name="Piazza S."/>
            <person name="Reed J."/>
            <person name="Reid J.F."/>
            <person name="Ring B.Z."/>
            <person name="Ringwald M."/>
            <person name="Rost B."/>
            <person name="Ruan Y."/>
            <person name="Salzberg S.L."/>
            <person name="Sandelin A."/>
            <person name="Schneider C."/>
            <person name="Schoenbach C."/>
            <person name="Sekiguchi K."/>
            <person name="Semple C.A."/>
            <person name="Seno S."/>
            <person name="Sessa L."/>
            <person name="Sheng Y."/>
            <person name="Shibata Y."/>
            <person name="Shimada H."/>
            <person name="Shimada K."/>
            <person name="Silva D."/>
            <person name="Sinclair B."/>
            <person name="Sperling S."/>
            <person name="Stupka E."/>
            <person name="Sugiura K."/>
            <person name="Sultana R."/>
            <person name="Takenaka Y."/>
            <person name="Taki K."/>
            <person name="Tammoja K."/>
            <person name="Tan S.L."/>
            <person name="Tang S."/>
            <person name="Taylor M.S."/>
            <person name="Tegner J."/>
            <person name="Teichmann S.A."/>
            <person name="Ueda H.R."/>
            <person name="van Nimwegen E."/>
            <person name="Verardo R."/>
            <person name="Wei C.L."/>
            <person name="Yagi K."/>
            <person name="Yamanishi H."/>
            <person name="Zabarovsky E."/>
            <person name="Zhu S."/>
            <person name="Zimmer A."/>
            <person name="Hide W."/>
            <person name="Bult C."/>
            <person name="Grimmond S.M."/>
            <person name="Teasdale R.D."/>
            <person name="Liu E.T."/>
            <person name="Brusic V."/>
            <person name="Quackenbush J."/>
            <person name="Wahlestedt C."/>
            <person name="Mattick J.S."/>
            <person name="Hume D.A."/>
            <person name="Kai C."/>
            <person name="Sasaki D."/>
            <person name="Tomaru Y."/>
            <person name="Fukuda S."/>
            <person name="Kanamori-Katayama M."/>
            <person name="Suzuki M."/>
            <person name="Aoki J."/>
            <person name="Arakawa T."/>
            <person name="Iida J."/>
            <person name="Imamura K."/>
            <person name="Itoh M."/>
            <person name="Kato T."/>
            <person name="Kawaji H."/>
            <person name="Kawagashira N."/>
            <person name="Kawashima T."/>
            <person name="Kojima M."/>
            <person name="Kondo S."/>
            <person name="Konno H."/>
            <person name="Nakano K."/>
            <person name="Ninomiya N."/>
            <person name="Nishio T."/>
            <person name="Okada M."/>
            <person name="Plessy C."/>
            <person name="Shibata K."/>
            <person name="Shiraki T."/>
            <person name="Suzuki S."/>
            <person name="Tagami M."/>
            <person name="Waki K."/>
            <person name="Watahiki A."/>
            <person name="Okamura-Oho Y."/>
            <person name="Suzuki H."/>
            <person name="Kawai J."/>
            <person name="Hayashizaki Y."/>
        </authorList>
    </citation>
    <scope>NUCLEOTIDE SEQUENCE [LARGE SCALE MRNA]</scope>
    <source>
        <strain>C57BL/6J</strain>
    </source>
</reference>
<reference key="3">
    <citation type="journal article" date="2004" name="Genome Res.">
        <title>The status, quality, and expansion of the NIH full-length cDNA project: the Mammalian Gene Collection (MGC).</title>
        <authorList>
            <consortium name="The MGC Project Team"/>
        </authorList>
    </citation>
    <scope>NUCLEOTIDE SEQUENCE [LARGE SCALE MRNA]</scope>
    <source>
        <strain>FVB/N</strain>
        <tissue>Kidney</tissue>
    </source>
</reference>
<reference key="4">
    <citation type="journal article" date="2004" name="Proc. Natl. Acad. Sci. U.S.A.">
        <title>Vasorin, a transforming growth factor beta-binding protein expressed in vascular smooth muscle cells, modulates the arterial response to injury in vivo.</title>
        <authorList>
            <person name="Ikeda Y."/>
            <person name="Imai Y."/>
            <person name="Kumagai H."/>
            <person name="Nosaka T."/>
            <person name="Morikawa Y."/>
            <person name="Hisaoka T."/>
            <person name="Manabe I."/>
            <person name="Maemura K."/>
            <person name="Nakaoka T."/>
            <person name="Imamura T."/>
            <person name="Miyazono K."/>
            <person name="Komuro I."/>
            <person name="Nagai R."/>
            <person name="Kitamura T."/>
        </authorList>
    </citation>
    <scope>DEVELOPMENTAL STAGE</scope>
    <scope>INDUCTION</scope>
</reference>
<organism>
    <name type="scientific">Mus musculus</name>
    <name type="common">Mouse</name>
    <dbReference type="NCBI Taxonomy" id="10090"/>
    <lineage>
        <taxon>Eukaryota</taxon>
        <taxon>Metazoa</taxon>
        <taxon>Chordata</taxon>
        <taxon>Craniata</taxon>
        <taxon>Vertebrata</taxon>
        <taxon>Euteleostomi</taxon>
        <taxon>Mammalia</taxon>
        <taxon>Eutheria</taxon>
        <taxon>Euarchontoglires</taxon>
        <taxon>Glires</taxon>
        <taxon>Rodentia</taxon>
        <taxon>Myomorpha</taxon>
        <taxon>Muroidea</taxon>
        <taxon>Muridae</taxon>
        <taxon>Murinae</taxon>
        <taxon>Mus</taxon>
        <taxon>Mus</taxon>
    </lineage>
</organism>